<accession>B0VNL3</accession>
<protein>
    <recommendedName>
        <fullName evidence="1">Threonylcarbamoyl-AMP synthase</fullName>
        <shortName evidence="1">TC-AMP synthase</shortName>
        <ecNumber evidence="1">2.7.7.87</ecNumber>
    </recommendedName>
    <alternativeName>
        <fullName evidence="1">L-threonylcarbamoyladenylate synthase</fullName>
    </alternativeName>
    <alternativeName>
        <fullName evidence="1">t(6)A37 threonylcarbamoyladenosine biosynthesis protein TsaC</fullName>
    </alternativeName>
    <alternativeName>
        <fullName evidence="1">tRNA threonylcarbamoyladenosine biosynthesis protein TsaC</fullName>
    </alternativeName>
</protein>
<name>TSAC_ACIBS</name>
<comment type="function">
    <text evidence="1">Required for the formation of a threonylcarbamoyl group on adenosine at position 37 (t(6)A37) in tRNAs that read codons beginning with adenine. Catalyzes the conversion of L-threonine, HCO(3)(-)/CO(2) and ATP to give threonylcarbamoyl-AMP (TC-AMP) as the acyladenylate intermediate, with the release of diphosphate.</text>
</comment>
<comment type="catalytic activity">
    <reaction evidence="1">
        <text>L-threonine + hydrogencarbonate + ATP = L-threonylcarbamoyladenylate + diphosphate + H2O</text>
        <dbReference type="Rhea" id="RHEA:36407"/>
        <dbReference type="ChEBI" id="CHEBI:15377"/>
        <dbReference type="ChEBI" id="CHEBI:17544"/>
        <dbReference type="ChEBI" id="CHEBI:30616"/>
        <dbReference type="ChEBI" id="CHEBI:33019"/>
        <dbReference type="ChEBI" id="CHEBI:57926"/>
        <dbReference type="ChEBI" id="CHEBI:73682"/>
        <dbReference type="EC" id="2.7.7.87"/>
    </reaction>
</comment>
<comment type="subcellular location">
    <subcellularLocation>
        <location evidence="1">Cytoplasm</location>
    </subcellularLocation>
</comment>
<comment type="similarity">
    <text evidence="1">Belongs to the SUA5 family. TsaC subfamily.</text>
</comment>
<keyword id="KW-0067">ATP-binding</keyword>
<keyword id="KW-0963">Cytoplasm</keyword>
<keyword id="KW-0547">Nucleotide-binding</keyword>
<keyword id="KW-0548">Nucleotidyltransferase</keyword>
<keyword id="KW-0808">Transferase</keyword>
<keyword id="KW-0819">tRNA processing</keyword>
<evidence type="ECO:0000255" key="1">
    <source>
        <dbReference type="HAMAP-Rule" id="MF_01852"/>
    </source>
</evidence>
<gene>
    <name evidence="1" type="primary">tsaC</name>
    <name type="synonym">rimN</name>
    <name type="ordered locus">ABSDF0180</name>
</gene>
<reference key="1">
    <citation type="journal article" date="2008" name="PLoS ONE">
        <title>Comparative analysis of Acinetobacters: three genomes for three lifestyles.</title>
        <authorList>
            <person name="Vallenet D."/>
            <person name="Nordmann P."/>
            <person name="Barbe V."/>
            <person name="Poirel L."/>
            <person name="Mangenot S."/>
            <person name="Bataille E."/>
            <person name="Dossat C."/>
            <person name="Gas S."/>
            <person name="Kreimeyer A."/>
            <person name="Lenoble P."/>
            <person name="Oztas S."/>
            <person name="Poulain J."/>
            <person name="Segurens B."/>
            <person name="Robert C."/>
            <person name="Abergel C."/>
            <person name="Claverie J.-M."/>
            <person name="Raoult D."/>
            <person name="Medigue C."/>
            <person name="Weissenbach J."/>
            <person name="Cruveiller S."/>
        </authorList>
    </citation>
    <scope>NUCLEOTIDE SEQUENCE [LARGE SCALE GENOMIC DNA]</scope>
    <source>
        <strain>SDF</strain>
    </source>
</reference>
<organism>
    <name type="scientific">Acinetobacter baumannii (strain SDF)</name>
    <dbReference type="NCBI Taxonomy" id="509170"/>
    <lineage>
        <taxon>Bacteria</taxon>
        <taxon>Pseudomonadati</taxon>
        <taxon>Pseudomonadota</taxon>
        <taxon>Gammaproteobacteria</taxon>
        <taxon>Moraxellales</taxon>
        <taxon>Moraxellaceae</taxon>
        <taxon>Acinetobacter</taxon>
        <taxon>Acinetobacter calcoaceticus/baumannii complex</taxon>
    </lineage>
</organism>
<sequence>MITTSVTEAAECLQQGQVLAYPTEAVWGLGCDPFNEQAFQKILELKQRPIEKGVILLAGHISQVEHLLTSLPQTTQQEIIDCWTNHQPSERATTWLLPADQHIPSWIKGEHPLVAVRVTTHPLCVALCNAFHGFIVSTSANPSGQEPAHSLQDACQYFGSQLNYLNGDLGQSQQPSRIINALTGEVIRP</sequence>
<dbReference type="EC" id="2.7.7.87" evidence="1"/>
<dbReference type="EMBL" id="CU468230">
    <property type="protein sequence ID" value="CAO99583.1"/>
    <property type="molecule type" value="Genomic_DNA"/>
</dbReference>
<dbReference type="SMR" id="B0VNL3"/>
<dbReference type="KEGG" id="abm:ABSDF0180"/>
<dbReference type="HOGENOM" id="CLU_031397_6_0_6"/>
<dbReference type="Proteomes" id="UP000001741">
    <property type="component" value="Chromosome"/>
</dbReference>
<dbReference type="GO" id="GO:0005737">
    <property type="term" value="C:cytoplasm"/>
    <property type="evidence" value="ECO:0007669"/>
    <property type="project" value="UniProtKB-SubCell"/>
</dbReference>
<dbReference type="GO" id="GO:0005524">
    <property type="term" value="F:ATP binding"/>
    <property type="evidence" value="ECO:0007669"/>
    <property type="project" value="UniProtKB-UniRule"/>
</dbReference>
<dbReference type="GO" id="GO:0003725">
    <property type="term" value="F:double-stranded RNA binding"/>
    <property type="evidence" value="ECO:0007669"/>
    <property type="project" value="InterPro"/>
</dbReference>
<dbReference type="GO" id="GO:0061710">
    <property type="term" value="F:L-threonylcarbamoyladenylate synthase"/>
    <property type="evidence" value="ECO:0007669"/>
    <property type="project" value="UniProtKB-EC"/>
</dbReference>
<dbReference type="GO" id="GO:0000049">
    <property type="term" value="F:tRNA binding"/>
    <property type="evidence" value="ECO:0007669"/>
    <property type="project" value="TreeGrafter"/>
</dbReference>
<dbReference type="GO" id="GO:0006450">
    <property type="term" value="P:regulation of translational fidelity"/>
    <property type="evidence" value="ECO:0007669"/>
    <property type="project" value="TreeGrafter"/>
</dbReference>
<dbReference type="GO" id="GO:0002949">
    <property type="term" value="P:tRNA threonylcarbamoyladenosine modification"/>
    <property type="evidence" value="ECO:0007669"/>
    <property type="project" value="UniProtKB-UniRule"/>
</dbReference>
<dbReference type="Gene3D" id="3.90.870.10">
    <property type="entry name" value="DHBP synthase"/>
    <property type="match status" value="1"/>
</dbReference>
<dbReference type="HAMAP" id="MF_01852">
    <property type="entry name" value="TsaC"/>
    <property type="match status" value="1"/>
</dbReference>
<dbReference type="InterPro" id="IPR017945">
    <property type="entry name" value="DHBP_synth_RibB-like_a/b_dom"/>
</dbReference>
<dbReference type="InterPro" id="IPR006070">
    <property type="entry name" value="Sua5-like_dom"/>
</dbReference>
<dbReference type="InterPro" id="IPR023535">
    <property type="entry name" value="TC-AMP_synthase"/>
</dbReference>
<dbReference type="InterPro" id="IPR050156">
    <property type="entry name" value="TC-AMP_synthase_SUA5"/>
</dbReference>
<dbReference type="PANTHER" id="PTHR17490">
    <property type="entry name" value="SUA5"/>
    <property type="match status" value="1"/>
</dbReference>
<dbReference type="PANTHER" id="PTHR17490:SF18">
    <property type="entry name" value="THREONYLCARBAMOYL-AMP SYNTHASE"/>
    <property type="match status" value="1"/>
</dbReference>
<dbReference type="Pfam" id="PF01300">
    <property type="entry name" value="Sua5_yciO_yrdC"/>
    <property type="match status" value="1"/>
</dbReference>
<dbReference type="SUPFAM" id="SSF55821">
    <property type="entry name" value="YrdC/RibB"/>
    <property type="match status" value="1"/>
</dbReference>
<dbReference type="PROSITE" id="PS51163">
    <property type="entry name" value="YRDC"/>
    <property type="match status" value="1"/>
</dbReference>
<proteinExistence type="inferred from homology"/>
<feature type="chain" id="PRO_0000352889" description="Threonylcarbamoyl-AMP synthase">
    <location>
        <begin position="1"/>
        <end position="189"/>
    </location>
</feature>
<feature type="domain" description="YrdC-like" evidence="1">
    <location>
        <begin position="3"/>
        <end position="189"/>
    </location>
</feature>